<gene>
    <name type="primary">COII</name>
</gene>
<comment type="function">
    <text evidence="1">Component of the cytochrome c oxidase, the last enzyme in the mitochondrial electron transport chain which drives oxidative phosphorylation. The respiratory chain contains 3 multisubunit complexes succinate dehydrogenase (complex II, CII), ubiquinol-cytochrome c oxidoreductase (cytochrome b-c1 complex, complex III, CIII) and cytochrome c oxidase (complex IV, CIV), that cooperate to transfer electrons derived from NADH and succinate to molecular oxygen, creating an electrochemical gradient over the inner membrane that drives transmembrane transport and the ATP synthase. Cytochrome c oxidase is the component of the respiratory chain that catalyzes the reduction of oxygen to water. Electrons originating from reduced cytochrome c in the intermembrane space (IMS) are transferred via the dinuclear copper A center (CU(A)) of subunit 2 and heme A of subunit 1 to the active site in subunit 1, a binuclear center (BNC) formed by heme A3 and copper B (CU(B)). The BNC reduces molecular oxygen to 2 water molecules using 4 electrons from cytochrome c in the IMS and 4 protons from the mitochondrial matrix.</text>
</comment>
<comment type="catalytic activity">
    <reaction evidence="1">
        <text>4 Fe(II)-[cytochrome c] + O2 + 8 H(+)(in) = 4 Fe(III)-[cytochrome c] + 2 H2O + 4 H(+)(out)</text>
        <dbReference type="Rhea" id="RHEA:11436"/>
        <dbReference type="Rhea" id="RHEA-COMP:10350"/>
        <dbReference type="Rhea" id="RHEA-COMP:14399"/>
        <dbReference type="ChEBI" id="CHEBI:15377"/>
        <dbReference type="ChEBI" id="CHEBI:15378"/>
        <dbReference type="ChEBI" id="CHEBI:15379"/>
        <dbReference type="ChEBI" id="CHEBI:29033"/>
        <dbReference type="ChEBI" id="CHEBI:29034"/>
        <dbReference type="EC" id="7.1.1.9"/>
    </reaction>
    <physiologicalReaction direction="left-to-right" evidence="1">
        <dbReference type="Rhea" id="RHEA:11437"/>
    </physiologicalReaction>
</comment>
<comment type="cofactor">
    <cofactor evidence="1">
        <name>Cu cation</name>
        <dbReference type="ChEBI" id="CHEBI:23378"/>
    </cofactor>
    <text evidence="1">Binds a dinuclear copper A center per subunit.</text>
</comment>
<comment type="subunit">
    <text evidence="1">Component of the cytochrome c oxidase (complex IV, CIV), a multisubunit enzyme composed of a catalytic core of 3 subunits and several supernumerary subunits. The complex exists as a monomer or a dimer and forms supercomplexes (SCs) in the inner mitochondrial membrane with ubiquinol-cytochrome c oxidoreductase (cytochrome b-c1 complex, complex III, CIII).</text>
</comment>
<comment type="subcellular location">
    <subcellularLocation>
        <location evidence="1">Mitochondrion inner membrane</location>
        <topology evidence="1">Multi-pass membrane protein</topology>
    </subcellularLocation>
</comment>
<comment type="similarity">
    <text evidence="3">Belongs to the cytochrome c oxidase subunit 2 family.</text>
</comment>
<geneLocation type="mitochondrion"/>
<keyword id="KW-0186">Copper</keyword>
<keyword id="KW-0249">Electron transport</keyword>
<keyword id="KW-0460">Magnesium</keyword>
<keyword id="KW-0472">Membrane</keyword>
<keyword id="KW-0479">Metal-binding</keyword>
<keyword id="KW-0496">Mitochondrion</keyword>
<keyword id="KW-0999">Mitochondrion inner membrane</keyword>
<keyword id="KW-0679">Respiratory chain</keyword>
<keyword id="KW-1278">Translocase</keyword>
<keyword id="KW-0812">Transmembrane</keyword>
<keyword id="KW-1133">Transmembrane helix</keyword>
<keyword id="KW-0813">Transport</keyword>
<sequence length="227" mass="26435">MATWSNFNLQNSASPLMEQIIFFHDHTLVILIMITILVGYLMISLFFNSYINRFLLEGQMIELIWTILPAITLIFIALPSLRLLYLLDELNNPLITLKSIGHQWYWSYEYSDFKNIQFDSYMIPINEMKNDNFRLLDVDNRIVLPMNNQIRILVTATDVIHSWTIPSLGVKVDANPGRLNQTNFFINRPGIFYGQCSEICGANHSFMPIVIESISIKNFINWINNYS</sequence>
<organism>
    <name type="scientific">Choristoneura rosaceana</name>
    <name type="common">Oblique banded leafroller</name>
    <dbReference type="NCBI Taxonomy" id="27543"/>
    <lineage>
        <taxon>Eukaryota</taxon>
        <taxon>Metazoa</taxon>
        <taxon>Ecdysozoa</taxon>
        <taxon>Arthropoda</taxon>
        <taxon>Hexapoda</taxon>
        <taxon>Insecta</taxon>
        <taxon>Pterygota</taxon>
        <taxon>Neoptera</taxon>
        <taxon>Endopterygota</taxon>
        <taxon>Lepidoptera</taxon>
        <taxon>Glossata</taxon>
        <taxon>Ditrysia</taxon>
        <taxon>Tortricoidea</taxon>
        <taxon>Tortricidae</taxon>
        <taxon>Tortricinae</taxon>
        <taxon>Choristoneura</taxon>
    </lineage>
</organism>
<protein>
    <recommendedName>
        <fullName>Cytochrome c oxidase subunit 2</fullName>
        <ecNumber>7.1.1.9</ecNumber>
    </recommendedName>
    <alternativeName>
        <fullName>Cytochrome c oxidase polypeptide II</fullName>
    </alternativeName>
</protein>
<dbReference type="EC" id="7.1.1.9"/>
<dbReference type="EMBL" id="L19099">
    <property type="protein sequence ID" value="AAA53649.1"/>
    <property type="molecule type" value="Genomic_DNA"/>
</dbReference>
<dbReference type="SMR" id="P98030"/>
<dbReference type="GO" id="GO:0005743">
    <property type="term" value="C:mitochondrial inner membrane"/>
    <property type="evidence" value="ECO:0007669"/>
    <property type="project" value="UniProtKB-SubCell"/>
</dbReference>
<dbReference type="GO" id="GO:0005507">
    <property type="term" value="F:copper ion binding"/>
    <property type="evidence" value="ECO:0007669"/>
    <property type="project" value="InterPro"/>
</dbReference>
<dbReference type="GO" id="GO:0004129">
    <property type="term" value="F:cytochrome-c oxidase activity"/>
    <property type="evidence" value="ECO:0007669"/>
    <property type="project" value="UniProtKB-EC"/>
</dbReference>
<dbReference type="GO" id="GO:0042773">
    <property type="term" value="P:ATP synthesis coupled electron transport"/>
    <property type="evidence" value="ECO:0007669"/>
    <property type="project" value="TreeGrafter"/>
</dbReference>
<dbReference type="CDD" id="cd13912">
    <property type="entry name" value="CcO_II_C"/>
    <property type="match status" value="1"/>
</dbReference>
<dbReference type="FunFam" id="1.10.287.90:FF:000006">
    <property type="entry name" value="Cytochrome c oxidase subunit 2"/>
    <property type="match status" value="1"/>
</dbReference>
<dbReference type="FunFam" id="2.60.40.420:FF:000001">
    <property type="entry name" value="Cytochrome c oxidase subunit 2"/>
    <property type="match status" value="1"/>
</dbReference>
<dbReference type="Gene3D" id="1.10.287.90">
    <property type="match status" value="1"/>
</dbReference>
<dbReference type="Gene3D" id="2.60.40.420">
    <property type="entry name" value="Cupredoxins - blue copper proteins"/>
    <property type="match status" value="1"/>
</dbReference>
<dbReference type="InterPro" id="IPR045187">
    <property type="entry name" value="CcO_II"/>
</dbReference>
<dbReference type="InterPro" id="IPR002429">
    <property type="entry name" value="CcO_II-like_C"/>
</dbReference>
<dbReference type="InterPro" id="IPR034210">
    <property type="entry name" value="CcO_II_C"/>
</dbReference>
<dbReference type="InterPro" id="IPR001505">
    <property type="entry name" value="Copper_CuA"/>
</dbReference>
<dbReference type="InterPro" id="IPR008972">
    <property type="entry name" value="Cupredoxin"/>
</dbReference>
<dbReference type="InterPro" id="IPR014222">
    <property type="entry name" value="Cyt_c_oxidase_su2"/>
</dbReference>
<dbReference type="InterPro" id="IPR011759">
    <property type="entry name" value="Cyt_c_oxidase_su2_TM_dom"/>
</dbReference>
<dbReference type="InterPro" id="IPR036257">
    <property type="entry name" value="Cyt_c_oxidase_su2_TM_sf"/>
</dbReference>
<dbReference type="NCBIfam" id="TIGR02866">
    <property type="entry name" value="CoxB"/>
    <property type="match status" value="1"/>
</dbReference>
<dbReference type="PANTHER" id="PTHR22888:SF9">
    <property type="entry name" value="CYTOCHROME C OXIDASE SUBUNIT 2"/>
    <property type="match status" value="1"/>
</dbReference>
<dbReference type="PANTHER" id="PTHR22888">
    <property type="entry name" value="CYTOCHROME C OXIDASE, SUBUNIT II"/>
    <property type="match status" value="1"/>
</dbReference>
<dbReference type="Pfam" id="PF00116">
    <property type="entry name" value="COX2"/>
    <property type="match status" value="1"/>
</dbReference>
<dbReference type="Pfam" id="PF02790">
    <property type="entry name" value="COX2_TM"/>
    <property type="match status" value="1"/>
</dbReference>
<dbReference type="PRINTS" id="PR01166">
    <property type="entry name" value="CYCOXIDASEII"/>
</dbReference>
<dbReference type="SUPFAM" id="SSF49503">
    <property type="entry name" value="Cupredoxins"/>
    <property type="match status" value="1"/>
</dbReference>
<dbReference type="SUPFAM" id="SSF81464">
    <property type="entry name" value="Cytochrome c oxidase subunit II-like, transmembrane region"/>
    <property type="match status" value="1"/>
</dbReference>
<dbReference type="PROSITE" id="PS00078">
    <property type="entry name" value="COX2"/>
    <property type="match status" value="1"/>
</dbReference>
<dbReference type="PROSITE" id="PS50857">
    <property type="entry name" value="COX2_CUA"/>
    <property type="match status" value="1"/>
</dbReference>
<dbReference type="PROSITE" id="PS50999">
    <property type="entry name" value="COX2_TM"/>
    <property type="match status" value="1"/>
</dbReference>
<feature type="chain" id="PRO_0000183553" description="Cytochrome c oxidase subunit 2">
    <location>
        <begin position="1"/>
        <end position="227"/>
    </location>
</feature>
<feature type="topological domain" description="Mitochondrial intermembrane" evidence="2">
    <location>
        <begin position="1"/>
        <end position="26"/>
    </location>
</feature>
<feature type="transmembrane region" description="Helical" evidence="2">
    <location>
        <begin position="27"/>
        <end position="51"/>
    </location>
</feature>
<feature type="topological domain" description="Mitochondrial matrix" evidence="2">
    <location>
        <begin position="52"/>
        <end position="62"/>
    </location>
</feature>
<feature type="transmembrane region" description="Helical" evidence="2">
    <location>
        <begin position="63"/>
        <end position="81"/>
    </location>
</feature>
<feature type="topological domain" description="Mitochondrial intermembrane" evidence="2">
    <location>
        <begin position="82"/>
        <end position="227"/>
    </location>
</feature>
<feature type="binding site" evidence="1">
    <location>
        <position position="161"/>
    </location>
    <ligand>
        <name>Cu cation</name>
        <dbReference type="ChEBI" id="CHEBI:23378"/>
        <label>A1</label>
    </ligand>
</feature>
<feature type="binding site" evidence="1">
    <location>
        <position position="196"/>
    </location>
    <ligand>
        <name>Cu cation</name>
        <dbReference type="ChEBI" id="CHEBI:23378"/>
        <label>A1</label>
    </ligand>
</feature>
<feature type="binding site" evidence="1">
    <location>
        <position position="196"/>
    </location>
    <ligand>
        <name>Cu cation</name>
        <dbReference type="ChEBI" id="CHEBI:23378"/>
        <label>A2</label>
    </ligand>
</feature>
<feature type="binding site" evidence="1">
    <location>
        <position position="198"/>
    </location>
    <ligand>
        <name>Cu cation</name>
        <dbReference type="ChEBI" id="CHEBI:23378"/>
        <label>A2</label>
    </ligand>
</feature>
<feature type="binding site" evidence="1">
    <location>
        <position position="198"/>
    </location>
    <ligand>
        <name>Mg(2+)</name>
        <dbReference type="ChEBI" id="CHEBI:18420"/>
        <note>ligand shared with subunit 1</note>
    </ligand>
</feature>
<feature type="binding site" evidence="1">
    <location>
        <position position="200"/>
    </location>
    <ligand>
        <name>Cu cation</name>
        <dbReference type="ChEBI" id="CHEBI:23378"/>
        <label>A1</label>
    </ligand>
</feature>
<feature type="binding site" evidence="1">
    <location>
        <position position="200"/>
    </location>
    <ligand>
        <name>Cu cation</name>
        <dbReference type="ChEBI" id="CHEBI:23378"/>
        <label>A2</label>
    </ligand>
</feature>
<feature type="binding site" evidence="1">
    <location>
        <position position="204"/>
    </location>
    <ligand>
        <name>Cu cation</name>
        <dbReference type="ChEBI" id="CHEBI:23378"/>
        <label>A2</label>
    </ligand>
</feature>
<feature type="binding site" evidence="1">
    <location>
        <position position="207"/>
    </location>
    <ligand>
        <name>Cu cation</name>
        <dbReference type="ChEBI" id="CHEBI:23378"/>
        <label>A1</label>
    </ligand>
</feature>
<proteinExistence type="inferred from homology"/>
<accession>P98030</accession>
<reference key="1">
    <citation type="journal article" date="1994" name="Mol. Biol. Evol.">
        <title>Mitochondrial DNA sequence variation in the spruce budworm species complex (Choristoneura: Lepidoptera).</title>
        <authorList>
            <person name="Sperling F.A.H."/>
            <person name="Hickey D.A."/>
        </authorList>
    </citation>
    <scope>NUCLEOTIDE SEQUENCE [GENOMIC DNA]</scope>
    <source>
        <strain>205</strain>
    </source>
</reference>
<evidence type="ECO:0000250" key="1">
    <source>
        <dbReference type="UniProtKB" id="P00410"/>
    </source>
</evidence>
<evidence type="ECO:0000255" key="2"/>
<evidence type="ECO:0000305" key="3"/>
<name>COX2_CHORO</name>